<organism>
    <name type="scientific">Xenopus tropicalis</name>
    <name type="common">Western clawed frog</name>
    <name type="synonym">Silurana tropicalis</name>
    <dbReference type="NCBI Taxonomy" id="8364"/>
    <lineage>
        <taxon>Eukaryota</taxon>
        <taxon>Metazoa</taxon>
        <taxon>Chordata</taxon>
        <taxon>Craniata</taxon>
        <taxon>Vertebrata</taxon>
        <taxon>Euteleostomi</taxon>
        <taxon>Amphibia</taxon>
        <taxon>Batrachia</taxon>
        <taxon>Anura</taxon>
        <taxon>Pipoidea</taxon>
        <taxon>Pipidae</taxon>
        <taxon>Xenopodinae</taxon>
        <taxon>Xenopus</taxon>
        <taxon>Silurana</taxon>
    </lineage>
</organism>
<keyword id="KW-0256">Endoplasmic reticulum</keyword>
<keyword id="KW-0472">Membrane</keyword>
<keyword id="KW-1185">Reference proteome</keyword>
<keyword id="KW-0812">Transmembrane</keyword>
<keyword id="KW-1133">Transmembrane helix</keyword>
<accession>Q5XH84</accession>
<name>TM203_XENTR</name>
<proteinExistence type="evidence at transcript level"/>
<reference key="1">
    <citation type="submission" date="2004-10" db="EMBL/GenBank/DDBJ databases">
        <authorList>
            <consortium name="NIH - Xenopus Gene Collection (XGC) project"/>
        </authorList>
    </citation>
    <scope>NUCLEOTIDE SEQUENCE [LARGE SCALE MRNA]</scope>
    <source>
        <tissue>Embryo</tissue>
    </source>
</reference>
<gene>
    <name type="primary">tmem203</name>
</gene>
<protein>
    <recommendedName>
        <fullName>Transmembrane protein 203</fullName>
    </recommendedName>
</protein>
<sequence length="136" mass="15982">MLFSLLELVQWLGFAQLEIFLHIWALLVFTVLLALKADGFAPDMSWWNIFIPFFTADGLSTYFTTIVTVRLFQDGEKRQAVLRLFWILTILSLKFVFEMLLCQKLVEQSRELWFGLIMSPVFILLQLLMIRACRVN</sequence>
<feature type="chain" id="PRO_0000317206" description="Transmembrane protein 203">
    <location>
        <begin position="1"/>
        <end position="136"/>
    </location>
</feature>
<feature type="transmembrane region" description="Helical" evidence="3">
    <location>
        <begin position="14"/>
        <end position="34"/>
    </location>
</feature>
<feature type="transmembrane region" description="Helical" evidence="3">
    <location>
        <begin position="50"/>
        <end position="72"/>
    </location>
</feature>
<feature type="transmembrane region" description="Helical" evidence="3">
    <location>
        <begin position="81"/>
        <end position="101"/>
    </location>
</feature>
<feature type="transmembrane region" description="Helical" evidence="3">
    <location>
        <begin position="112"/>
        <end position="132"/>
    </location>
</feature>
<dbReference type="EMBL" id="BC084189">
    <property type="protein sequence ID" value="AAH84189.1"/>
    <property type="molecule type" value="mRNA"/>
</dbReference>
<dbReference type="RefSeq" id="NP_001011060.1">
    <property type="nucleotide sequence ID" value="NM_001011060.1"/>
</dbReference>
<dbReference type="FunCoup" id="Q5XH84">
    <property type="interactions" value="919"/>
</dbReference>
<dbReference type="DNASU" id="496470"/>
<dbReference type="GeneID" id="496470"/>
<dbReference type="KEGG" id="xtr:496470"/>
<dbReference type="AGR" id="Xenbase:XB-GENE-6454036"/>
<dbReference type="CTD" id="94107"/>
<dbReference type="Xenbase" id="XB-GENE-6454036">
    <property type="gene designation" value="tmem203"/>
</dbReference>
<dbReference type="InParanoid" id="Q5XH84"/>
<dbReference type="OMA" id="LNTYFCA"/>
<dbReference type="OrthoDB" id="6234541at2759"/>
<dbReference type="Proteomes" id="UP000008143">
    <property type="component" value="Chromosome 8"/>
</dbReference>
<dbReference type="GO" id="GO:0005783">
    <property type="term" value="C:endoplasmic reticulum"/>
    <property type="evidence" value="ECO:0000250"/>
    <property type="project" value="UniProtKB"/>
</dbReference>
<dbReference type="GO" id="GO:0005789">
    <property type="term" value="C:endoplasmic reticulum membrane"/>
    <property type="evidence" value="ECO:0007669"/>
    <property type="project" value="UniProtKB-SubCell"/>
</dbReference>
<dbReference type="GO" id="GO:0005793">
    <property type="term" value="C:endoplasmic reticulum-Golgi intermediate compartment"/>
    <property type="evidence" value="ECO:0007669"/>
    <property type="project" value="UniProtKB-SubCell"/>
</dbReference>
<dbReference type="CDD" id="cd22816">
    <property type="entry name" value="TMEM203"/>
    <property type="match status" value="1"/>
</dbReference>
<dbReference type="InterPro" id="IPR019396">
    <property type="entry name" value="TM_Fragile-X-F-assoc"/>
</dbReference>
<dbReference type="PANTHER" id="PTHR13568">
    <property type="entry name" value="FAM11A, B PROTEIN"/>
    <property type="match status" value="1"/>
</dbReference>
<dbReference type="PANTHER" id="PTHR13568:SF9">
    <property type="entry name" value="TRANSMEMBRANE PROTEIN 203"/>
    <property type="match status" value="1"/>
</dbReference>
<dbReference type="Pfam" id="PF10269">
    <property type="entry name" value="Tmemb_185A"/>
    <property type="match status" value="1"/>
</dbReference>
<comment type="function">
    <text evidence="1 2">Involved in the regulation of cellular calcium homeotasis. May act as a regulator of STING-mediated inflammatory signaling in macrophages.</text>
</comment>
<comment type="subcellular location">
    <subcellularLocation>
        <location evidence="2">Endoplasmic reticulum membrane</location>
        <topology evidence="3">Multi-pass membrane protein</topology>
    </subcellularLocation>
    <subcellularLocation>
        <location evidence="1">Endoplasmic reticulum-Golgi intermediate compartment</location>
    </subcellularLocation>
</comment>
<evidence type="ECO:0000250" key="1">
    <source>
        <dbReference type="UniProtKB" id="Q8R235"/>
    </source>
</evidence>
<evidence type="ECO:0000250" key="2">
    <source>
        <dbReference type="UniProtKB" id="Q969S6"/>
    </source>
</evidence>
<evidence type="ECO:0000255" key="3"/>